<gene>
    <name type="primary">RPS21</name>
</gene>
<sequence length="83" mass="9111">MQNDAGEFVDLYVPRKCSASNRIIGAKDHASIQMNVAEVDKVTGRFNGQFKTYAICGAIRRMGESDDSILRLAKADGIVSKNF</sequence>
<accession>P63221</accession>
<accession>A1XQV0</accession>
<accession>P35265</accession>
<feature type="chain" id="PRO_0000194732" description="Small ribosomal subunit protein eS21">
    <location>
        <begin position="1"/>
        <end position="83"/>
    </location>
</feature>
<feature type="modified residue" description="N-acetylmethionine" evidence="1">
    <location>
        <position position="1"/>
    </location>
</feature>
<feature type="modified residue" description="N6-acetyllysine" evidence="1">
    <location>
        <position position="81"/>
    </location>
</feature>
<feature type="cross-link" description="Glycyl lysine isopeptide (Lys-Gly) (interchain with G-Cter in SUMO2)" evidence="1">
    <location>
        <position position="41"/>
    </location>
</feature>
<dbReference type="EMBL" id="Z84015">
    <property type="protein sequence ID" value="CAB06311.1"/>
    <property type="molecule type" value="mRNA"/>
</dbReference>
<dbReference type="EMBL" id="DQ629172">
    <property type="protein sequence ID" value="ABK55656.1"/>
    <property type="molecule type" value="mRNA"/>
</dbReference>
<dbReference type="RefSeq" id="NP_001090949.1">
    <property type="nucleotide sequence ID" value="NM_001097480.2"/>
</dbReference>
<dbReference type="PDB" id="3J7P">
    <property type="method" value="EM"/>
    <property type="resolution" value="3.50 A"/>
    <property type="chains" value="SV=1-83"/>
</dbReference>
<dbReference type="PDB" id="3J7R">
    <property type="method" value="EM"/>
    <property type="resolution" value="3.90 A"/>
    <property type="chains" value="SV=1-83"/>
</dbReference>
<dbReference type="PDBsum" id="3J7P"/>
<dbReference type="PDBsum" id="3J7R"/>
<dbReference type="SMR" id="P63221"/>
<dbReference type="FunCoup" id="P63221">
    <property type="interactions" value="2441"/>
</dbReference>
<dbReference type="STRING" id="9823.ENSSSCP00000020869"/>
<dbReference type="PaxDb" id="9823-ENSSSCP00000002737"/>
<dbReference type="PeptideAtlas" id="P63221"/>
<dbReference type="Ensembl" id="ENSSSCT00000026530.4">
    <property type="protein sequence ID" value="ENSSSCP00000020869.1"/>
    <property type="gene ID" value="ENSSSCG00000021825.4"/>
</dbReference>
<dbReference type="Ensembl" id="ENSSSCT00025067292.1">
    <property type="protein sequence ID" value="ENSSSCP00025028798.1"/>
    <property type="gene ID" value="ENSSSCG00025049418.1"/>
</dbReference>
<dbReference type="Ensembl" id="ENSSSCT00030037958.1">
    <property type="protein sequence ID" value="ENSSSCP00030017427.1"/>
    <property type="gene ID" value="ENSSSCG00030027135.1"/>
</dbReference>
<dbReference type="Ensembl" id="ENSSSCT00035012676.1">
    <property type="protein sequence ID" value="ENSSSCP00035004281.1"/>
    <property type="gene ID" value="ENSSSCG00035010134.1"/>
</dbReference>
<dbReference type="Ensembl" id="ENSSSCT00040096625.1">
    <property type="protein sequence ID" value="ENSSSCP00040042937.1"/>
    <property type="gene ID" value="ENSSSCG00040070426.1"/>
</dbReference>
<dbReference type="Ensembl" id="ENSSSCT00045038079.1">
    <property type="protein sequence ID" value="ENSSSCP00045026459.1"/>
    <property type="gene ID" value="ENSSSCG00045022298.1"/>
</dbReference>
<dbReference type="Ensembl" id="ENSSSCT00050101354.1">
    <property type="protein sequence ID" value="ENSSSCP00050044079.1"/>
    <property type="gene ID" value="ENSSSCG00050074066.1"/>
</dbReference>
<dbReference type="Ensembl" id="ENSSSCT00055023636.1">
    <property type="protein sequence ID" value="ENSSSCP00055018690.1"/>
    <property type="gene ID" value="ENSSSCG00055012074.1"/>
</dbReference>
<dbReference type="Ensembl" id="ENSSSCT00060039367.1">
    <property type="protein sequence ID" value="ENSSSCP00060016691.1"/>
    <property type="gene ID" value="ENSSSCG00060029127.1"/>
</dbReference>
<dbReference type="Ensembl" id="ENSSSCT00065048260.1">
    <property type="protein sequence ID" value="ENSSSCP00065020820.1"/>
    <property type="gene ID" value="ENSSSCG00065035426.1"/>
</dbReference>
<dbReference type="Ensembl" id="ENSSSCT00070041136.1">
    <property type="protein sequence ID" value="ENSSSCP00070034534.1"/>
    <property type="gene ID" value="ENSSSCG00070020687.1"/>
</dbReference>
<dbReference type="Ensembl" id="ENSSSCT00115014949">
    <property type="protein sequence ID" value="ENSSSCP00115014129"/>
    <property type="gene ID" value="ENSSSCG00115008558"/>
</dbReference>
<dbReference type="GeneID" id="100037996"/>
<dbReference type="KEGG" id="ssc:100037996"/>
<dbReference type="KEGG" id="ssc:100518848"/>
<dbReference type="CTD" id="6227"/>
<dbReference type="VGNC" id="VGNC:108734">
    <property type="gene designation" value="RPS21"/>
</dbReference>
<dbReference type="eggNOG" id="KOG3486">
    <property type="taxonomic scope" value="Eukaryota"/>
</dbReference>
<dbReference type="GeneTree" id="ENSGT00390000017515"/>
<dbReference type="HOGENOM" id="CLU_167122_2_0_1"/>
<dbReference type="InParanoid" id="P63221"/>
<dbReference type="OMA" id="GESDACM"/>
<dbReference type="OrthoDB" id="278325at2759"/>
<dbReference type="TreeFam" id="TF300167"/>
<dbReference type="Reactome" id="R-SSC-156827">
    <property type="pathway name" value="L13a-mediated translational silencing of Ceruloplasmin expression"/>
</dbReference>
<dbReference type="Reactome" id="R-SSC-1799339">
    <property type="pathway name" value="SRP-dependent cotranslational protein targeting to membrane"/>
</dbReference>
<dbReference type="Reactome" id="R-SSC-72649">
    <property type="pathway name" value="Translation initiation complex formation"/>
</dbReference>
<dbReference type="Reactome" id="R-SSC-72689">
    <property type="pathway name" value="Formation of a pool of free 40S subunits"/>
</dbReference>
<dbReference type="Reactome" id="R-SSC-72695">
    <property type="pathway name" value="Formation of the ternary complex, and subsequently, the 43S complex"/>
</dbReference>
<dbReference type="Reactome" id="R-SSC-72702">
    <property type="pathway name" value="Ribosomal scanning and start codon recognition"/>
</dbReference>
<dbReference type="Reactome" id="R-SSC-72706">
    <property type="pathway name" value="GTP hydrolysis and joining of the 60S ribosomal subunit"/>
</dbReference>
<dbReference type="Reactome" id="R-SSC-975956">
    <property type="pathway name" value="Nonsense Mediated Decay (NMD) independent of the Exon Junction Complex (EJC)"/>
</dbReference>
<dbReference type="Reactome" id="R-SSC-975957">
    <property type="pathway name" value="Nonsense Mediated Decay (NMD) enhanced by the Exon Junction Complex (EJC)"/>
</dbReference>
<dbReference type="Proteomes" id="UP000008227">
    <property type="component" value="Chromosome 17"/>
</dbReference>
<dbReference type="Proteomes" id="UP000314985">
    <property type="component" value="Chromosome 17"/>
</dbReference>
<dbReference type="Proteomes" id="UP000694570">
    <property type="component" value="Unplaced"/>
</dbReference>
<dbReference type="Proteomes" id="UP000694571">
    <property type="component" value="Unplaced"/>
</dbReference>
<dbReference type="Proteomes" id="UP000694720">
    <property type="component" value="Unplaced"/>
</dbReference>
<dbReference type="Proteomes" id="UP000694722">
    <property type="component" value="Unplaced"/>
</dbReference>
<dbReference type="Proteomes" id="UP000694723">
    <property type="component" value="Unplaced"/>
</dbReference>
<dbReference type="Proteomes" id="UP000694724">
    <property type="component" value="Unplaced"/>
</dbReference>
<dbReference type="Proteomes" id="UP000694725">
    <property type="component" value="Unplaced"/>
</dbReference>
<dbReference type="Proteomes" id="UP000694726">
    <property type="component" value="Unplaced"/>
</dbReference>
<dbReference type="Proteomes" id="UP000694727">
    <property type="component" value="Unplaced"/>
</dbReference>
<dbReference type="Proteomes" id="UP000694728">
    <property type="component" value="Unplaced"/>
</dbReference>
<dbReference type="Bgee" id="ENSSSCG00000021825">
    <property type="expression patterns" value="Expressed in blood and 43 other cell types or tissues"/>
</dbReference>
<dbReference type="GO" id="GO:0098556">
    <property type="term" value="C:cytoplasmic side of rough endoplasmic reticulum membrane"/>
    <property type="evidence" value="ECO:0000314"/>
    <property type="project" value="UniProtKB"/>
</dbReference>
<dbReference type="GO" id="GO:0022627">
    <property type="term" value="C:cytosolic small ribosomal subunit"/>
    <property type="evidence" value="ECO:0000314"/>
    <property type="project" value="UniProtKB"/>
</dbReference>
<dbReference type="GO" id="GO:0045202">
    <property type="term" value="C:synapse"/>
    <property type="evidence" value="ECO:0007669"/>
    <property type="project" value="Ensembl"/>
</dbReference>
<dbReference type="GO" id="GO:0043022">
    <property type="term" value="F:ribosome binding"/>
    <property type="evidence" value="ECO:0000250"/>
    <property type="project" value="UniProtKB"/>
</dbReference>
<dbReference type="GO" id="GO:0003735">
    <property type="term" value="F:structural constituent of ribosome"/>
    <property type="evidence" value="ECO:0000318"/>
    <property type="project" value="GO_Central"/>
</dbReference>
<dbReference type="GO" id="GO:0002181">
    <property type="term" value="P:cytoplasmic translation"/>
    <property type="evidence" value="ECO:0000250"/>
    <property type="project" value="UniProtKB"/>
</dbReference>
<dbReference type="GO" id="GO:0000447">
    <property type="term" value="P:endonucleolytic cleavage in ITS1 to separate SSU-rRNA from 5.8S rRNA and LSU-rRNA from tricistronic rRNA transcript (SSU-rRNA, 5.8S rRNA, LSU-rRNA)"/>
    <property type="evidence" value="ECO:0000318"/>
    <property type="project" value="GO_Central"/>
</dbReference>
<dbReference type="GO" id="GO:0000461">
    <property type="term" value="P:endonucleolytic cleavage to generate mature 3'-end of SSU-rRNA from (SSU-rRNA, 5.8S rRNA, LSU-rRNA)"/>
    <property type="evidence" value="ECO:0000318"/>
    <property type="project" value="GO_Central"/>
</dbReference>
<dbReference type="FunFam" id="3.30.1230.20:FF:000001">
    <property type="entry name" value="40S ribosomal protein S21"/>
    <property type="match status" value="1"/>
</dbReference>
<dbReference type="Gene3D" id="3.30.1230.20">
    <property type="match status" value="1"/>
</dbReference>
<dbReference type="InterPro" id="IPR001931">
    <property type="entry name" value="Ribosomal_eS21"/>
</dbReference>
<dbReference type="InterPro" id="IPR018279">
    <property type="entry name" value="Ribosomal_eS21_CS"/>
</dbReference>
<dbReference type="InterPro" id="IPR038579">
    <property type="entry name" value="Ribosomal_eS21_sf"/>
</dbReference>
<dbReference type="PANTHER" id="PTHR10442">
    <property type="entry name" value="40S RIBOSOMAL PROTEIN S21"/>
    <property type="match status" value="1"/>
</dbReference>
<dbReference type="Pfam" id="PF01249">
    <property type="entry name" value="Ribosomal_S21e"/>
    <property type="match status" value="1"/>
</dbReference>
<dbReference type="PIRSF" id="PIRSF002148">
    <property type="entry name" value="Ribosomal_S21e"/>
    <property type="match status" value="1"/>
</dbReference>
<dbReference type="PROSITE" id="PS00996">
    <property type="entry name" value="RIBOSOMAL_S21E"/>
    <property type="match status" value="1"/>
</dbReference>
<protein>
    <recommendedName>
        <fullName evidence="3">Small ribosomal subunit protein eS21</fullName>
    </recommendedName>
    <alternativeName>
        <fullName>40S ribosomal protein S21</fullName>
    </alternativeName>
</protein>
<proteinExistence type="evidence at protein level"/>
<organism>
    <name type="scientific">Sus scrofa</name>
    <name type="common">Pig</name>
    <dbReference type="NCBI Taxonomy" id="9823"/>
    <lineage>
        <taxon>Eukaryota</taxon>
        <taxon>Metazoa</taxon>
        <taxon>Chordata</taxon>
        <taxon>Craniata</taxon>
        <taxon>Vertebrata</taxon>
        <taxon>Euteleostomi</taxon>
        <taxon>Mammalia</taxon>
        <taxon>Eutheria</taxon>
        <taxon>Laurasiatheria</taxon>
        <taxon>Artiodactyla</taxon>
        <taxon>Suina</taxon>
        <taxon>Suidae</taxon>
        <taxon>Sus</taxon>
    </lineage>
</organism>
<evidence type="ECO:0000250" key="1">
    <source>
        <dbReference type="UniProtKB" id="P63220"/>
    </source>
</evidence>
<evidence type="ECO:0000269" key="2">
    <source>
    </source>
</evidence>
<evidence type="ECO:0000305" key="3"/>
<evidence type="ECO:0007744" key="4">
    <source>
        <dbReference type="PDB" id="3J7P"/>
    </source>
</evidence>
<evidence type="ECO:0007744" key="5">
    <source>
        <dbReference type="PDB" id="3J7R"/>
    </source>
</evidence>
<reference key="1">
    <citation type="submission" date="1997-01" db="EMBL/GenBank/DDBJ databases">
        <title>Evaluation and characterization of a porcine small intestine cDNA library.</title>
        <authorList>
            <person name="Winteroe A.K."/>
            <person name="Fredholm M."/>
        </authorList>
    </citation>
    <scope>NUCLEOTIDE SEQUENCE [LARGE SCALE MRNA]</scope>
    <source>
        <tissue>Small intestine</tissue>
    </source>
</reference>
<reference key="2">
    <citation type="submission" date="2006-05" db="EMBL/GenBank/DDBJ databases">
        <title>Generation and analysis of cDNA sequences derived from a porcine skeletal muscle library.</title>
        <authorList>
            <person name="Cai G."/>
            <person name="Chen Y."/>
            <person name="Wang C."/>
            <person name="Li J."/>
            <person name="Peng G."/>
            <person name="Zhang H."/>
        </authorList>
    </citation>
    <scope>NUCLEOTIDE SEQUENCE [LARGE SCALE MRNA]</scope>
    <source>
        <tissue>Longissimus dorsi muscle</tissue>
    </source>
</reference>
<reference evidence="4 5" key="3">
    <citation type="journal article" date="2014" name="Cell">
        <title>Structure of the mammalian ribosome-Sec61 complex to 3.4 A resolution.</title>
        <authorList>
            <person name="Voorhees R.M."/>
            <person name="Fernandez I.S."/>
            <person name="Scheres S.H."/>
            <person name="Hegde R.S."/>
        </authorList>
    </citation>
    <scope>STRUCTURE BY ELECTRON MICROSCOPY (3.50 ANGSTROMS)</scope>
    <scope>SUBCELLULAR LOCATION</scope>
    <scope>SUBUNIT</scope>
</reference>
<keyword id="KW-0002">3D-structure</keyword>
<keyword id="KW-0007">Acetylation</keyword>
<keyword id="KW-0963">Cytoplasm</keyword>
<keyword id="KW-0256">Endoplasmic reticulum</keyword>
<keyword id="KW-1017">Isopeptide bond</keyword>
<keyword id="KW-1185">Reference proteome</keyword>
<keyword id="KW-0687">Ribonucleoprotein</keyword>
<keyword id="KW-0689">Ribosomal protein</keyword>
<keyword id="KW-0832">Ubl conjugation</keyword>
<name>RS21_PIG</name>
<comment type="function">
    <text evidence="1">Component of the small ribosomal subunit. The ribosome is a large ribonucleoprotein complex responsible for the synthesis of proteins in the cell.</text>
</comment>
<comment type="subunit">
    <text evidence="1">Component of the 40S small ribosomal subunit.</text>
</comment>
<comment type="subcellular location">
    <subcellularLocation>
        <location evidence="1">Cytoplasm</location>
        <location evidence="1">Cytosol</location>
    </subcellularLocation>
    <subcellularLocation>
        <location evidence="2">Cytoplasm</location>
    </subcellularLocation>
    <subcellularLocation>
        <location evidence="2">Rough endoplasmic reticulum</location>
    </subcellularLocation>
    <text evidence="1 2">Detected on cytosolic polysomes (By similarity). Detected in ribosomes that are associated with the rough endoplasmic reticulum.</text>
</comment>
<comment type="similarity">
    <text evidence="3">Belongs to the eukaryotic ribosomal protein eS21 family.</text>
</comment>